<name>DCXR_HUMAN</name>
<reference key="1">
    <citation type="journal article" date="1999" name="Endocrinology">
        <title>P34H sperm protein is preferentially expressed by the human corpus epididymidis.</title>
        <authorList>
            <person name="Legare C."/>
            <person name="Gaudreault C."/>
            <person name="St Jacques S."/>
            <person name="Sullivan R."/>
        </authorList>
    </citation>
    <scope>NUCLEOTIDE SEQUENCE [MRNA]</scope>
    <scope>TISSUE SPECIFICITY</scope>
    <source>
        <tissue>Epididymis</tissue>
    </source>
</reference>
<reference key="2">
    <citation type="journal article" date="2002" name="J. Biol. Chem.">
        <title>Molecular characterization of mammalian dicarbonyl/L-xylulose reductase and its localization in kidney.</title>
        <authorList>
            <person name="Nakagawa J."/>
            <person name="Ishikura S."/>
            <person name="Asami J."/>
            <person name="Isaji T."/>
            <person name="Usami N."/>
            <person name="Hara A."/>
            <person name="Sakurai T."/>
            <person name="Tsuritani K."/>
            <person name="Oda K."/>
            <person name="Takahashi M."/>
            <person name="Yoshimoto M."/>
            <person name="Otsuka N."/>
            <person name="Kitamura K."/>
        </authorList>
    </citation>
    <scope>NUCLEOTIDE SEQUENCE [MRNA]</scope>
    <scope>ENZYME ACTIVITY</scope>
    <scope>TISSUE SPECIFICITY</scope>
    <scope>INVOLVEMENT IN PNTSU</scope>
</reference>
<reference key="3">
    <citation type="journal article" date="2003" name="Zhonghua Nan Ke Xue">
        <title>Molecular cloning of human sperm surface protein P34H gene and semi-quantitative analysis of its expression in testis and epididymidis.</title>
        <authorList>
            <person name="Xia X.Y."/>
            <person name="Xu X.F."/>
            <person name="Gao Y."/>
            <person name="Huang Y.F."/>
        </authorList>
    </citation>
    <scope>NUCLEOTIDE SEQUENCE [MRNA]</scope>
    <source>
        <tissue>Epididymis</tissue>
        <tissue>Liver</tissue>
        <tissue>Testis</tissue>
    </source>
</reference>
<reference key="4">
    <citation type="submission" date="1998-12" db="EMBL/GenBank/DDBJ databases">
        <title>A novel gene expressed in the human adrenal gland.</title>
        <authorList>
            <person name="Huang C."/>
            <person name="Li Y."/>
            <person name="Wu T."/>
            <person name="Peng Y."/>
            <person name="Gu Y."/>
            <person name="Zhang L."/>
            <person name="Jiang C."/>
            <person name="Zhang C."/>
            <person name="Han Z."/>
            <person name="Wang Y."/>
            <person name="Chen Z."/>
            <person name="Fu G."/>
        </authorList>
    </citation>
    <scope>NUCLEOTIDE SEQUENCE [MRNA]</scope>
    <source>
        <tissue>Adrenal gland</tissue>
    </source>
</reference>
<reference key="5">
    <citation type="submission" date="1999-04" db="EMBL/GenBank/DDBJ databases">
        <title>Cloning and characterization of a new human cDNA of carbonyl reductase.</title>
        <authorList>
            <person name="Liu Q."/>
            <person name="Yu L."/>
            <person name="Zhao S.Y."/>
        </authorList>
    </citation>
    <scope>NUCLEOTIDE SEQUENCE [MRNA]</scope>
</reference>
<reference key="6">
    <citation type="submission" date="2003-05" db="EMBL/GenBank/DDBJ databases">
        <title>Cloning of human full-length CDSs in BD Creator(TM) system donor vector.</title>
        <authorList>
            <person name="Kalnine N."/>
            <person name="Chen X."/>
            <person name="Rolfs A."/>
            <person name="Halleck A."/>
            <person name="Hines L."/>
            <person name="Eisenstein S."/>
            <person name="Koundinya M."/>
            <person name="Raphael J."/>
            <person name="Moreira D."/>
            <person name="Kelley T."/>
            <person name="LaBaer J."/>
            <person name="Lin Y."/>
            <person name="Phelan M."/>
            <person name="Farmer A."/>
        </authorList>
    </citation>
    <scope>NUCLEOTIDE SEQUENCE [LARGE SCALE MRNA]</scope>
</reference>
<reference key="7">
    <citation type="journal article" date="2004" name="Genome Res.">
        <title>The status, quality, and expansion of the NIH full-length cDNA project: the Mammalian Gene Collection (MGC).</title>
        <authorList>
            <consortium name="The MGC Project Team"/>
        </authorList>
    </citation>
    <scope>NUCLEOTIDE SEQUENCE [LARGE SCALE MRNA]</scope>
    <source>
        <tissue>Lung</tissue>
        <tissue>Placenta</tissue>
    </source>
</reference>
<reference key="8">
    <citation type="journal article" date="2003" name="Nat. Biotechnol.">
        <title>Exploring proteomes and analyzing protein processing by mass spectrometric identification of sorted N-terminal peptides.</title>
        <authorList>
            <person name="Gevaert K."/>
            <person name="Goethals M."/>
            <person name="Martens L."/>
            <person name="Van Damme J."/>
            <person name="Staes A."/>
            <person name="Thomas G.R."/>
            <person name="Vandekerckhove J."/>
        </authorList>
    </citation>
    <scope>PROTEIN SEQUENCE OF 1-8</scope>
    <scope>ACETYLATION AT MET-1</scope>
    <source>
        <tissue>Platelet</tissue>
    </source>
</reference>
<reference key="9">
    <citation type="journal article" date="1970" name="N. Engl. J. Med.">
        <title>The enzymatic defect in essential pentosuria.</title>
        <authorList>
            <person name="Wang Y.M."/>
            <person name="Van Eys J."/>
        </authorList>
    </citation>
    <scope>POSSIBLE INVOLVEMENT IN PNTSU</scope>
</reference>
<reference key="10">
    <citation type="journal article" date="2011" name="BMC Syst. Biol.">
        <title>Initial characterization of the human central proteome.</title>
        <authorList>
            <person name="Burkard T.R."/>
            <person name="Planyavsky M."/>
            <person name="Kaupe I."/>
            <person name="Breitwieser F.P."/>
            <person name="Buerckstuemmer T."/>
            <person name="Bennett K.L."/>
            <person name="Superti-Furga G."/>
            <person name="Colinge J."/>
        </authorList>
    </citation>
    <scope>IDENTIFICATION BY MASS SPECTROMETRY [LARGE SCALE ANALYSIS]</scope>
</reference>
<reference key="11">
    <citation type="journal article" date="2011" name="Proc. Natl. Acad. Sci. U.S.A.">
        <title>Garrod's fourth inborn error of metabolism solved by the identification of mutations causing pentosuria.</title>
        <authorList>
            <person name="Pierce S.B."/>
            <person name="Spurrell C.H."/>
            <person name="Mandell J.B."/>
            <person name="Lee M.K."/>
            <person name="Zeligson S."/>
            <person name="Bereman M.S."/>
            <person name="Stray S.M."/>
            <person name="Fokstuen S."/>
            <person name="MacCoss M.J."/>
            <person name="Levy-Lahad E."/>
            <person name="King M.C."/>
            <person name="Motulsky A.G."/>
        </authorList>
    </citation>
    <scope>INVOLVEMENT IN PNTSU</scope>
</reference>
<reference key="12">
    <citation type="journal article" date="2012" name="Mol. Cell. Proteomics">
        <title>Comparative large-scale characterisation of plant vs. mammal proteins reveals similar and idiosyncratic N-alpha acetylation features.</title>
        <authorList>
            <person name="Bienvenut W.V."/>
            <person name="Sumpton D."/>
            <person name="Martinez A."/>
            <person name="Lilla S."/>
            <person name="Espagne C."/>
            <person name="Meinnel T."/>
            <person name="Giglione C."/>
        </authorList>
    </citation>
    <scope>ACETYLATION [LARGE SCALE ANALYSIS] AT MET-1</scope>
    <scope>IDENTIFICATION BY MASS SPECTROMETRY [LARGE SCALE ANALYSIS]</scope>
</reference>
<reference key="13">
    <citation type="journal article" date="2012" name="Proc. Natl. Acad. Sci. U.S.A.">
        <title>N-terminal acetylome analyses and functional insights of the N-terminal acetyltransferase NatB.</title>
        <authorList>
            <person name="Van Damme P."/>
            <person name="Lasa M."/>
            <person name="Polevoda B."/>
            <person name="Gazquez C."/>
            <person name="Elosegui-Artola A."/>
            <person name="Kim D.S."/>
            <person name="De Juan-Pardo E."/>
            <person name="Demeyer K."/>
            <person name="Hole K."/>
            <person name="Larrea E."/>
            <person name="Timmerman E."/>
            <person name="Prieto J."/>
            <person name="Arnesen T."/>
            <person name="Sherman F."/>
            <person name="Gevaert K."/>
            <person name="Aldabe R."/>
        </authorList>
    </citation>
    <scope>ACETYLATION [LARGE SCALE ANALYSIS] AT MET-1</scope>
    <scope>IDENTIFICATION BY MASS SPECTROMETRY [LARGE SCALE ANALYSIS]</scope>
</reference>
<reference key="14">
    <citation type="journal article" date="2014" name="J. Proteomics">
        <title>An enzyme assisted RP-RPLC approach for in-depth analysis of human liver phosphoproteome.</title>
        <authorList>
            <person name="Bian Y."/>
            <person name="Song C."/>
            <person name="Cheng K."/>
            <person name="Dong M."/>
            <person name="Wang F."/>
            <person name="Huang J."/>
            <person name="Sun D."/>
            <person name="Wang L."/>
            <person name="Ye M."/>
            <person name="Zou H."/>
        </authorList>
    </citation>
    <scope>PHOSPHORYLATION [LARGE SCALE ANALYSIS] AT SER-46</scope>
    <scope>IDENTIFICATION BY MASS SPECTROMETRY [LARGE SCALE ANALYSIS]</scope>
    <source>
        <tissue>Liver</tissue>
    </source>
</reference>
<reference key="15">
    <citation type="journal article" date="2014" name="Mol. Cell. Proteomics">
        <title>Immunoaffinity enrichment and mass spectrometry analysis of protein methylation.</title>
        <authorList>
            <person name="Guo A."/>
            <person name="Gu H."/>
            <person name="Zhou J."/>
            <person name="Mulhern D."/>
            <person name="Wang Y."/>
            <person name="Lee K.A."/>
            <person name="Yang V."/>
            <person name="Aguiar M."/>
            <person name="Kornhauser J."/>
            <person name="Jia X."/>
            <person name="Ren J."/>
            <person name="Beausoleil S.A."/>
            <person name="Silva J.C."/>
            <person name="Vemulapalli V."/>
            <person name="Bedford M.T."/>
            <person name="Comb M.J."/>
        </authorList>
    </citation>
    <scope>METHYLATION [LARGE SCALE ANALYSIS] AT ARG-21</scope>
    <scope>IDENTIFICATION BY MASS SPECTROMETRY [LARGE SCALE ANALYSIS]</scope>
    <source>
        <tissue>Colon carcinoma</tissue>
    </source>
</reference>
<reference key="16">
    <citation type="journal article" date="2015" name="Proteomics">
        <title>N-terminome analysis of the human mitochondrial proteome.</title>
        <authorList>
            <person name="Vaca Jacome A.S."/>
            <person name="Rabilloud T."/>
            <person name="Schaeffer-Reiss C."/>
            <person name="Rompais M."/>
            <person name="Ayoub D."/>
            <person name="Lane L."/>
            <person name="Bairoch A."/>
            <person name="Van Dorsselaer A."/>
            <person name="Carapito C."/>
        </authorList>
    </citation>
    <scope>ACETYLATION [LARGE SCALE ANALYSIS] AT MET-1</scope>
    <scope>IDENTIFICATION BY MASS SPECTROMETRY [LARGE SCALE ANALYSIS]</scope>
</reference>
<reference key="17">
    <citation type="journal article" date="2002" name="Acta Crystallogr. D">
        <title>Crystallization and preliminary crystallographic analysis of human L-xylulose reductase.</title>
        <authorList>
            <person name="El-Kabbani O."/>
            <person name="Chung R.P.-T."/>
            <person name="Ishikura S."/>
            <person name="Usami N."/>
            <person name="Nakagawa J."/>
            <person name="Hara A."/>
        </authorList>
    </citation>
    <scope>X-RAY CRYSTALLOGRAPHY (1.96 ANGSTROMS)</scope>
</reference>
<reference key="18">
    <citation type="journal article" date="2004" name="Proteins">
        <title>Crystal structure of human L-xylulose reductase holoenzyme: probing the role of Asn107 with site-directed mutagenesis.</title>
        <authorList>
            <person name="El-Kabbani O."/>
            <person name="Ishikura S."/>
            <person name="Darmanin C."/>
            <person name="Carbone V."/>
            <person name="Chung R.P.-T."/>
            <person name="Usami N."/>
            <person name="Hara A."/>
        </authorList>
    </citation>
    <scope>X-RAY CRYSTALLOGRAPHY (1.96 ANGSTROMS) IN COMPLEX WITH NADP AND SUBSTRATE</scope>
    <scope>MUTAGENESIS OF ASN-107</scope>
</reference>
<sequence>MELFLAGRRVLVTGAGKGIGRGTVQALHATGARVVAVSRTQADLDSLVRECPGIEPVCVDLGDWEATERALGSVGPVDLLVNNAAVALLQPFLEVTKEAFDRSFEVNLRAVIQVSQIVARGLIARGVPGAIVNVSSQCSQRAVTNHSVYCSTKGALDMLTKVMALELGPHKIRVNAVNPTVVMTSMGQATWSDPHKAKTMLNRIPLGKFAEVEHVVNAILFLLSDRSGMTTGSTLPVEGGFWAC</sequence>
<accession>Q7Z4W1</accession>
<accession>Q9BTZ3</accession>
<accession>Q9UHY9</accession>
<gene>
    <name type="primary">DCXR</name>
    <name type="synonym">SDR20C1</name>
</gene>
<proteinExistence type="evidence at protein level"/>
<dbReference type="EC" id="1.1.1.10"/>
<dbReference type="EMBL" id="AB013846">
    <property type="protein sequence ID" value="BAB64299.1"/>
    <property type="molecule type" value="mRNA"/>
</dbReference>
<dbReference type="EMBL" id="AF515623">
    <property type="protein sequence ID" value="AAN59786.1"/>
    <property type="molecule type" value="mRNA"/>
</dbReference>
<dbReference type="EMBL" id="AF515624">
    <property type="protein sequence ID" value="AAO15991.1"/>
    <property type="molecule type" value="mRNA"/>
</dbReference>
<dbReference type="EMBL" id="AF515625">
    <property type="protein sequence ID" value="AAM54026.1"/>
    <property type="molecule type" value="mRNA"/>
</dbReference>
<dbReference type="EMBL" id="AF113123">
    <property type="protein sequence ID" value="AAF14864.1"/>
    <property type="molecule type" value="mRNA"/>
</dbReference>
<dbReference type="EMBL" id="AF139841">
    <property type="protein sequence ID" value="AAP97273.1"/>
    <property type="molecule type" value="mRNA"/>
</dbReference>
<dbReference type="EMBL" id="BT006881">
    <property type="protein sequence ID" value="AAP35527.1"/>
    <property type="molecule type" value="mRNA"/>
</dbReference>
<dbReference type="EMBL" id="BC001470">
    <property type="protein sequence ID" value="AAH01470.1"/>
    <property type="molecule type" value="mRNA"/>
</dbReference>
<dbReference type="EMBL" id="BC003018">
    <property type="protein sequence ID" value="AAH03018.1"/>
    <property type="molecule type" value="mRNA"/>
</dbReference>
<dbReference type="CCDS" id="CCDS11799.1"/>
<dbReference type="RefSeq" id="NP_001182147.1">
    <property type="nucleotide sequence ID" value="NM_001195218.1"/>
</dbReference>
<dbReference type="RefSeq" id="NP_057370.1">
    <property type="nucleotide sequence ID" value="NM_016286.4"/>
</dbReference>
<dbReference type="PDB" id="1PR9">
    <property type="method" value="X-ray"/>
    <property type="resolution" value="1.96 A"/>
    <property type="chains" value="A/B=1-244"/>
</dbReference>
<dbReference type="PDB" id="1WNT">
    <property type="method" value="X-ray"/>
    <property type="resolution" value="2.30 A"/>
    <property type="chains" value="A/B/C/D=1-244"/>
</dbReference>
<dbReference type="PDB" id="3D3W">
    <property type="method" value="X-ray"/>
    <property type="resolution" value="1.87 A"/>
    <property type="chains" value="A/B=1-244"/>
</dbReference>
<dbReference type="PDBsum" id="1PR9"/>
<dbReference type="PDBsum" id="1WNT"/>
<dbReference type="PDBsum" id="3D3W"/>
<dbReference type="SMR" id="Q7Z4W1"/>
<dbReference type="BioGRID" id="119357">
    <property type="interactions" value="91"/>
</dbReference>
<dbReference type="FunCoup" id="Q7Z4W1">
    <property type="interactions" value="337"/>
</dbReference>
<dbReference type="IntAct" id="Q7Z4W1">
    <property type="interactions" value="19"/>
</dbReference>
<dbReference type="MINT" id="Q7Z4W1"/>
<dbReference type="STRING" id="9606.ENSP00000303356"/>
<dbReference type="ChEMBL" id="CHEMBL2314"/>
<dbReference type="DrugBank" id="DB02831">
    <property type="generic name" value="Dihydrogenphosphate"/>
</dbReference>
<dbReference type="DrugBank" id="DB03461">
    <property type="generic name" value="Nicotinamide adenine dinucleotide phosphate"/>
</dbReference>
<dbReference type="GlyGen" id="Q7Z4W1">
    <property type="glycosylation" value="1 site, 1 O-linked glycan (1 site)"/>
</dbReference>
<dbReference type="iPTMnet" id="Q7Z4W1"/>
<dbReference type="PhosphoSitePlus" id="Q7Z4W1"/>
<dbReference type="SwissPalm" id="Q7Z4W1"/>
<dbReference type="BioMuta" id="DCXR"/>
<dbReference type="DMDM" id="50400451"/>
<dbReference type="REPRODUCTION-2DPAGE" id="IPI00448095"/>
<dbReference type="CPTAC" id="CPTAC-492"/>
<dbReference type="CPTAC" id="CPTAC-493"/>
<dbReference type="jPOST" id="Q7Z4W1"/>
<dbReference type="MassIVE" id="Q7Z4W1"/>
<dbReference type="PaxDb" id="9606-ENSP00000303356"/>
<dbReference type="PeptideAtlas" id="Q7Z4W1"/>
<dbReference type="ProteomicsDB" id="69250"/>
<dbReference type="Pumba" id="Q7Z4W1"/>
<dbReference type="Antibodypedia" id="19868">
    <property type="antibodies" value="349 antibodies from 32 providers"/>
</dbReference>
<dbReference type="DNASU" id="51181"/>
<dbReference type="Ensembl" id="ENST00000306869.7">
    <property type="protein sequence ID" value="ENSP00000303356.2"/>
    <property type="gene ID" value="ENSG00000169738.8"/>
</dbReference>
<dbReference type="GeneID" id="51181"/>
<dbReference type="KEGG" id="hsa:51181"/>
<dbReference type="MANE-Select" id="ENST00000306869.7">
    <property type="protein sequence ID" value="ENSP00000303356.2"/>
    <property type="RefSeq nucleotide sequence ID" value="NM_016286.4"/>
    <property type="RefSeq protein sequence ID" value="NP_057370.1"/>
</dbReference>
<dbReference type="UCSC" id="uc002kdg.4">
    <property type="organism name" value="human"/>
</dbReference>
<dbReference type="AGR" id="HGNC:18985"/>
<dbReference type="CTD" id="51181"/>
<dbReference type="DisGeNET" id="51181"/>
<dbReference type="GeneCards" id="DCXR"/>
<dbReference type="HGNC" id="HGNC:18985">
    <property type="gene designation" value="DCXR"/>
</dbReference>
<dbReference type="HPA" id="ENSG00000169738">
    <property type="expression patterns" value="Tissue enriched (liver)"/>
</dbReference>
<dbReference type="MalaCards" id="DCXR"/>
<dbReference type="MIM" id="260800">
    <property type="type" value="phenotype"/>
</dbReference>
<dbReference type="MIM" id="608347">
    <property type="type" value="gene"/>
</dbReference>
<dbReference type="neXtProt" id="NX_Q7Z4W1"/>
<dbReference type="OpenTargets" id="ENSG00000169738"/>
<dbReference type="Orphanet" id="2843">
    <property type="disease" value="Pentosuria"/>
</dbReference>
<dbReference type="PharmGKB" id="PA38772"/>
<dbReference type="VEuPathDB" id="HostDB:ENSG00000169738"/>
<dbReference type="eggNOG" id="KOG1207">
    <property type="taxonomic scope" value="Eukaryota"/>
</dbReference>
<dbReference type="GeneTree" id="ENSGT00940000154873"/>
<dbReference type="HOGENOM" id="CLU_010194_1_1_1"/>
<dbReference type="InParanoid" id="Q7Z4W1"/>
<dbReference type="OMA" id="FPQWGAY"/>
<dbReference type="OrthoDB" id="1393670at2759"/>
<dbReference type="PAN-GO" id="Q7Z4W1">
    <property type="GO annotations" value="4 GO annotations based on evolutionary models"/>
</dbReference>
<dbReference type="PhylomeDB" id="Q7Z4W1"/>
<dbReference type="TreeFam" id="TF313841"/>
<dbReference type="BRENDA" id="1.1.1.10">
    <property type="organism ID" value="2681"/>
</dbReference>
<dbReference type="PathwayCommons" id="Q7Z4W1"/>
<dbReference type="Reactome" id="R-HSA-5661270">
    <property type="pathway name" value="Formation of xylulose-5-phosphate"/>
</dbReference>
<dbReference type="Reactome" id="R-HSA-5662853">
    <property type="pathway name" value="Essential pentosuria"/>
</dbReference>
<dbReference type="SABIO-RK" id="Q7Z4W1"/>
<dbReference type="SignaLink" id="Q7Z4W1"/>
<dbReference type="BioGRID-ORCS" id="51181">
    <property type="hits" value="9 hits in 1161 CRISPR screens"/>
</dbReference>
<dbReference type="ChiTaRS" id="DCXR">
    <property type="organism name" value="human"/>
</dbReference>
<dbReference type="EvolutionaryTrace" id="Q7Z4W1"/>
<dbReference type="GenomeRNAi" id="51181"/>
<dbReference type="Pharos" id="Q7Z4W1">
    <property type="development level" value="Tbio"/>
</dbReference>
<dbReference type="PRO" id="PR:Q7Z4W1"/>
<dbReference type="Proteomes" id="UP000005640">
    <property type="component" value="Chromosome 17"/>
</dbReference>
<dbReference type="RNAct" id="Q7Z4W1">
    <property type="molecule type" value="protein"/>
</dbReference>
<dbReference type="Bgee" id="ENSG00000169738">
    <property type="expression patterns" value="Expressed in right lobe of liver and 197 other cell types or tissues"/>
</dbReference>
<dbReference type="ExpressionAtlas" id="Q7Z4W1">
    <property type="expression patterns" value="baseline and differential"/>
</dbReference>
<dbReference type="GO" id="GO:0005903">
    <property type="term" value="C:brush border"/>
    <property type="evidence" value="ECO:0007669"/>
    <property type="project" value="Ensembl"/>
</dbReference>
<dbReference type="GO" id="GO:0005881">
    <property type="term" value="C:cytoplasmic microtubule"/>
    <property type="evidence" value="ECO:0000314"/>
    <property type="project" value="UniProtKB"/>
</dbReference>
<dbReference type="GO" id="GO:0005829">
    <property type="term" value="C:cytosol"/>
    <property type="evidence" value="ECO:0007669"/>
    <property type="project" value="Ensembl"/>
</dbReference>
<dbReference type="GO" id="GO:0070062">
    <property type="term" value="C:extracellular exosome"/>
    <property type="evidence" value="ECO:0007005"/>
    <property type="project" value="UniProtKB"/>
</dbReference>
<dbReference type="GO" id="GO:0005902">
    <property type="term" value="C:microvillus"/>
    <property type="evidence" value="ECO:0007669"/>
    <property type="project" value="Ensembl"/>
</dbReference>
<dbReference type="GO" id="GO:0005739">
    <property type="term" value="C:mitochondrion"/>
    <property type="evidence" value="ECO:0006056"/>
    <property type="project" value="FlyBase"/>
</dbReference>
<dbReference type="GO" id="GO:0005634">
    <property type="term" value="C:nucleus"/>
    <property type="evidence" value="ECO:0007005"/>
    <property type="project" value="UniProtKB"/>
</dbReference>
<dbReference type="GO" id="GO:0005886">
    <property type="term" value="C:plasma membrane"/>
    <property type="evidence" value="ECO:0000304"/>
    <property type="project" value="Reactome"/>
</dbReference>
<dbReference type="GO" id="GO:0004090">
    <property type="term" value="F:carbonyl reductase (NADPH) activity"/>
    <property type="evidence" value="ECO:0000318"/>
    <property type="project" value="GO_Central"/>
</dbReference>
<dbReference type="GO" id="GO:0042802">
    <property type="term" value="F:identical protein binding"/>
    <property type="evidence" value="ECO:0000353"/>
    <property type="project" value="IntAct"/>
</dbReference>
<dbReference type="GO" id="GO:0050038">
    <property type="term" value="F:L-xylulose reductase (NADPH) activity"/>
    <property type="evidence" value="ECO:0000314"/>
    <property type="project" value="UniProtKB"/>
</dbReference>
<dbReference type="GO" id="GO:0016655">
    <property type="term" value="F:oxidoreductase activity, acting on NAD(P)H, quinone or similar compound as acceptor"/>
    <property type="evidence" value="ECO:0000314"/>
    <property type="project" value="UniProtKB"/>
</dbReference>
<dbReference type="GO" id="GO:0019640">
    <property type="term" value="P:D-glucuronate catabolic process to D-xylulose 5-phosphate"/>
    <property type="evidence" value="ECO:0007669"/>
    <property type="project" value="Ensembl"/>
</dbReference>
<dbReference type="GO" id="GO:0042732">
    <property type="term" value="P:D-xylose metabolic process"/>
    <property type="evidence" value="ECO:0007669"/>
    <property type="project" value="UniProtKB-KW"/>
</dbReference>
<dbReference type="GO" id="GO:0006006">
    <property type="term" value="P:glucose metabolic process"/>
    <property type="evidence" value="ECO:0000314"/>
    <property type="project" value="UniProtKB"/>
</dbReference>
<dbReference type="GO" id="GO:0006739">
    <property type="term" value="P:NADP metabolic process"/>
    <property type="evidence" value="ECO:0007669"/>
    <property type="project" value="Ensembl"/>
</dbReference>
<dbReference type="GO" id="GO:2000379">
    <property type="term" value="P:positive regulation of reactive oxygen species metabolic process"/>
    <property type="evidence" value="ECO:0000314"/>
    <property type="project" value="UniProtKB"/>
</dbReference>
<dbReference type="GO" id="GO:0005997">
    <property type="term" value="P:xylulose metabolic process"/>
    <property type="evidence" value="ECO:0000314"/>
    <property type="project" value="UniProtKB"/>
</dbReference>
<dbReference type="CDD" id="cd05351">
    <property type="entry name" value="XR_like_SDR_c"/>
    <property type="match status" value="1"/>
</dbReference>
<dbReference type="FunFam" id="3.40.50.720:FF:000214">
    <property type="entry name" value="L-xylulose reductase"/>
    <property type="match status" value="1"/>
</dbReference>
<dbReference type="Gene3D" id="3.40.50.720">
    <property type="entry name" value="NAD(P)-binding Rossmann-like Domain"/>
    <property type="match status" value="1"/>
</dbReference>
<dbReference type="InterPro" id="IPR051737">
    <property type="entry name" value="L-xylulose/Carbonyl_redctase"/>
</dbReference>
<dbReference type="InterPro" id="IPR036291">
    <property type="entry name" value="NAD(P)-bd_dom_sf"/>
</dbReference>
<dbReference type="InterPro" id="IPR020904">
    <property type="entry name" value="Sc_DH/Rdtase_CS"/>
</dbReference>
<dbReference type="InterPro" id="IPR002347">
    <property type="entry name" value="SDR_fam"/>
</dbReference>
<dbReference type="PANTHER" id="PTHR44252">
    <property type="entry name" value="D-ERYTHRULOSE REDUCTASE"/>
    <property type="match status" value="1"/>
</dbReference>
<dbReference type="PANTHER" id="PTHR44252:SF2">
    <property type="entry name" value="L-XYLULOSE REDUCTASE"/>
    <property type="match status" value="1"/>
</dbReference>
<dbReference type="Pfam" id="PF13561">
    <property type="entry name" value="adh_short_C2"/>
    <property type="match status" value="1"/>
</dbReference>
<dbReference type="PRINTS" id="PR00081">
    <property type="entry name" value="GDHRDH"/>
</dbReference>
<dbReference type="PRINTS" id="PR00080">
    <property type="entry name" value="SDRFAMILY"/>
</dbReference>
<dbReference type="SUPFAM" id="SSF51735">
    <property type="entry name" value="NAD(P)-binding Rossmann-fold domains"/>
    <property type="match status" value="1"/>
</dbReference>
<dbReference type="PROSITE" id="PS00061">
    <property type="entry name" value="ADH_SHORT"/>
    <property type="match status" value="1"/>
</dbReference>
<feature type="chain" id="PRO_0000054554" description="L-xylulose reductase">
    <location>
        <begin position="1"/>
        <end position="244"/>
    </location>
</feature>
<feature type="active site" description="Proton acceptor">
    <location>
        <position position="149"/>
    </location>
</feature>
<feature type="binding site" evidence="5">
    <location>
        <begin position="11"/>
        <end position="40"/>
    </location>
    <ligand>
        <name>NADP(+)</name>
        <dbReference type="ChEBI" id="CHEBI:58349"/>
    </ligand>
</feature>
<feature type="binding site" evidence="5">
    <location>
        <position position="136"/>
    </location>
    <ligand>
        <name>substrate</name>
    </ligand>
</feature>
<feature type="binding site" evidence="5">
    <location>
        <position position="153"/>
    </location>
    <ligand>
        <name>NADP(+)</name>
        <dbReference type="ChEBI" id="CHEBI:58349"/>
    </ligand>
</feature>
<feature type="modified residue" description="N-acetylmethionine" evidence="4 9 10 13">
    <location>
        <position position="1"/>
    </location>
</feature>
<feature type="modified residue" description="Omega-N-methylarginine" evidence="11">
    <location>
        <position position="21"/>
    </location>
</feature>
<feature type="modified residue" description="Phosphoserine" evidence="12">
    <location>
        <position position="46"/>
    </location>
</feature>
<feature type="mutagenesis site" description="Loss of function. Probably due to defects in formation of the active site and binding of coenzyme." evidence="5">
    <original>N</original>
    <variation>L</variation>
    <variation>D</variation>
    <location>
        <position position="107"/>
    </location>
</feature>
<feature type="sequence conflict" description="In Ref. 5; AAP97273." evidence="8" ref="5">
    <original>V</original>
    <variation>A</variation>
    <location>
        <position position="118"/>
    </location>
</feature>
<feature type="sequence conflict" description="In Ref. 1." evidence="8" ref="1">
    <original>G</original>
    <variation>R</variation>
    <location>
        <position position="239"/>
    </location>
</feature>
<feature type="strand" evidence="14">
    <location>
        <begin position="9"/>
        <end position="14"/>
    </location>
</feature>
<feature type="helix" evidence="14">
    <location>
        <begin position="18"/>
        <end position="29"/>
    </location>
</feature>
<feature type="strand" evidence="14">
    <location>
        <begin position="33"/>
        <end position="39"/>
    </location>
</feature>
<feature type="helix" evidence="14">
    <location>
        <begin position="41"/>
        <end position="50"/>
    </location>
</feature>
<feature type="strand" evidence="14">
    <location>
        <begin position="55"/>
        <end position="58"/>
    </location>
</feature>
<feature type="helix" evidence="14">
    <location>
        <begin position="64"/>
        <end position="71"/>
    </location>
</feature>
<feature type="strand" evidence="14">
    <location>
        <begin position="79"/>
        <end position="82"/>
    </location>
</feature>
<feature type="helix" evidence="14">
    <location>
        <begin position="92"/>
        <end position="94"/>
    </location>
</feature>
<feature type="helix" evidence="14">
    <location>
        <begin position="97"/>
        <end position="107"/>
    </location>
</feature>
<feature type="helix" evidence="14">
    <location>
        <begin position="109"/>
        <end position="125"/>
    </location>
</feature>
<feature type="strand" evidence="14">
    <location>
        <begin position="129"/>
        <end position="134"/>
    </location>
</feature>
<feature type="helix" evidence="14">
    <location>
        <begin position="137"/>
        <end position="139"/>
    </location>
</feature>
<feature type="helix" evidence="14">
    <location>
        <begin position="147"/>
        <end position="167"/>
    </location>
</feature>
<feature type="helix" evidence="14">
    <location>
        <begin position="168"/>
        <end position="170"/>
    </location>
</feature>
<feature type="strand" evidence="14">
    <location>
        <begin position="172"/>
        <end position="179"/>
    </location>
</feature>
<feature type="helix" evidence="14">
    <location>
        <begin position="185"/>
        <end position="188"/>
    </location>
</feature>
<feature type="helix" evidence="14">
    <location>
        <begin position="194"/>
        <end position="201"/>
    </location>
</feature>
<feature type="helix" evidence="14">
    <location>
        <begin position="212"/>
        <end position="223"/>
    </location>
</feature>
<feature type="helix" evidence="14">
    <location>
        <begin position="225"/>
        <end position="227"/>
    </location>
</feature>
<feature type="strand" evidence="14">
    <location>
        <begin position="234"/>
        <end position="238"/>
    </location>
</feature>
<feature type="helix" evidence="14">
    <location>
        <begin position="241"/>
        <end position="243"/>
    </location>
</feature>
<evidence type="ECO:0000250" key="1"/>
<evidence type="ECO:0000269" key="2">
    <source>
    </source>
</evidence>
<evidence type="ECO:0000269" key="3">
    <source>
    </source>
</evidence>
<evidence type="ECO:0000269" key="4">
    <source>
    </source>
</evidence>
<evidence type="ECO:0000269" key="5">
    <source>
    </source>
</evidence>
<evidence type="ECO:0000269" key="6">
    <source>
    </source>
</evidence>
<evidence type="ECO:0000269" key="7">
    <source>
    </source>
</evidence>
<evidence type="ECO:0000305" key="8"/>
<evidence type="ECO:0007744" key="9">
    <source>
    </source>
</evidence>
<evidence type="ECO:0007744" key="10">
    <source>
    </source>
</evidence>
<evidence type="ECO:0007744" key="11">
    <source>
    </source>
</evidence>
<evidence type="ECO:0007744" key="12">
    <source>
    </source>
</evidence>
<evidence type="ECO:0007744" key="13">
    <source>
    </source>
</evidence>
<evidence type="ECO:0007829" key="14">
    <source>
        <dbReference type="PDB" id="1PR9"/>
    </source>
</evidence>
<protein>
    <recommendedName>
        <fullName>L-xylulose reductase</fullName>
        <shortName>XR</shortName>
        <ecNumber>1.1.1.10</ecNumber>
    </recommendedName>
    <alternativeName>
        <fullName>Carbonyl reductase II</fullName>
    </alternativeName>
    <alternativeName>
        <fullName>Dicarbonyl/L-xylulose reductase</fullName>
    </alternativeName>
    <alternativeName>
        <fullName>Kidney dicarbonyl reductase</fullName>
        <shortName>kiDCR</shortName>
    </alternativeName>
    <alternativeName>
        <fullName>Short chain dehydrogenase/reductase family 20C member 1</fullName>
    </alternativeName>
    <alternativeName>
        <fullName>Sperm surface protein P34H</fullName>
    </alternativeName>
</protein>
<keyword id="KW-0002">3D-structure</keyword>
<keyword id="KW-0007">Acetylation</keyword>
<keyword id="KW-0119">Carbohydrate metabolism</keyword>
<keyword id="KW-0903">Direct protein sequencing</keyword>
<keyword id="KW-0313">Glucose metabolism</keyword>
<keyword id="KW-0472">Membrane</keyword>
<keyword id="KW-0488">Methylation</keyword>
<keyword id="KW-0521">NADP</keyword>
<keyword id="KW-0560">Oxidoreductase</keyword>
<keyword id="KW-0597">Phosphoprotein</keyword>
<keyword id="KW-1267">Proteomics identification</keyword>
<keyword id="KW-1185">Reference proteome</keyword>
<keyword id="KW-0859">Xylose metabolism</keyword>
<organism>
    <name type="scientific">Homo sapiens</name>
    <name type="common">Human</name>
    <dbReference type="NCBI Taxonomy" id="9606"/>
    <lineage>
        <taxon>Eukaryota</taxon>
        <taxon>Metazoa</taxon>
        <taxon>Chordata</taxon>
        <taxon>Craniata</taxon>
        <taxon>Vertebrata</taxon>
        <taxon>Euteleostomi</taxon>
        <taxon>Mammalia</taxon>
        <taxon>Eutheria</taxon>
        <taxon>Euarchontoglires</taxon>
        <taxon>Primates</taxon>
        <taxon>Haplorrhini</taxon>
        <taxon>Catarrhini</taxon>
        <taxon>Hominidae</taxon>
        <taxon>Homo</taxon>
    </lineage>
</organism>
<comment type="function">
    <text>Catalyzes the NADPH-dependent reduction of several pentoses, tetroses, trioses, alpha-dicarbonyl compounds and L-xylulose. Participates in the uronate cycle of glucose metabolism. May play a role in the water absorption and cellular osmoregulation in the proximal renal tubules by producing xylitol, an osmolyte, thereby preventing osmolytic stress from occurring in the renal tubules.</text>
</comment>
<comment type="catalytic activity">
    <reaction evidence="3">
        <text>xylitol + NADP(+) = L-xylulose + NADPH + H(+)</text>
        <dbReference type="Rhea" id="RHEA:17025"/>
        <dbReference type="ChEBI" id="CHEBI:15378"/>
        <dbReference type="ChEBI" id="CHEBI:17151"/>
        <dbReference type="ChEBI" id="CHEBI:17399"/>
        <dbReference type="ChEBI" id="CHEBI:57783"/>
        <dbReference type="ChEBI" id="CHEBI:58349"/>
        <dbReference type="EC" id="1.1.1.10"/>
    </reaction>
</comment>
<comment type="subunit">
    <text evidence="5">Homotetramer.</text>
</comment>
<comment type="interaction">
    <interactant intactId="EBI-1044712">
        <id>Q7Z4W1</id>
    </interactant>
    <interactant intactId="EBI-1044712">
        <id>Q7Z4W1</id>
        <label>DCXR</label>
    </interactant>
    <organismsDiffer>false</organismsDiffer>
    <experiments>5</experiments>
</comment>
<comment type="interaction">
    <interactant intactId="EBI-1044712">
        <id>Q7Z4W1</id>
    </interactant>
    <interactant intactId="EBI-12102178">
        <id>Q9NS18</id>
        <label>GLRX2</label>
    </interactant>
    <organismsDiffer>false</organismsDiffer>
    <experiments>3</experiments>
</comment>
<comment type="subcellular location">
    <subcellularLocation>
        <location evidence="1">Membrane</location>
        <topology evidence="1">Peripheral membrane protein</topology>
    </subcellularLocation>
    <text evidence="1">Probably recruited to membranes via an interaction with phosphatidylinositol.</text>
</comment>
<comment type="tissue specificity">
    <text evidence="2 3">Highly expressed in kidney, liver and epididymis. In the epididymis, it is mainly expressed in the proximal and distal sections of the corpus region. Weakly or not expressed in brain, lung, heart, spleen and testis.</text>
</comment>
<comment type="disease" evidence="3 6 7">
    <disease id="DI-04062">
        <name>Pentosuria</name>
        <acronym>PNTSU</acronym>
        <description>An inborn error of metabolism characterized by excessive urinary excretion of L-xylulose.</description>
        <dbReference type="MIM" id="260800"/>
    </disease>
    <text>The disease is caused by variants affecting the gene represented in this entry.</text>
</comment>
<comment type="similarity">
    <text evidence="8">Belongs to the short-chain dehydrogenases/reductases (SDR) family.</text>
</comment>